<protein>
    <recommendedName>
        <fullName>NADH-quinone oxidoreductase subunit 11</fullName>
        <ecNumber evidence="1">7.1.1.-</ecNumber>
    </recommendedName>
    <alternativeName>
        <fullName>NADH dehydrogenase I chain 11</fullName>
    </alternativeName>
    <alternativeName>
        <fullName>NDH-1 subunit 11</fullName>
    </alternativeName>
</protein>
<gene>
    <name type="primary">nqo11</name>
    <name type="ordered locus">TTHA0094</name>
</gene>
<dbReference type="EC" id="7.1.1.-" evidence="1"/>
<dbReference type="EMBL" id="U52917">
    <property type="protein sequence ID" value="AAA97948.1"/>
    <property type="molecule type" value="Genomic_DNA"/>
</dbReference>
<dbReference type="EMBL" id="AP008226">
    <property type="protein sequence ID" value="BAD69917.1"/>
    <property type="molecule type" value="Genomic_DNA"/>
</dbReference>
<dbReference type="PIR" id="T11908">
    <property type="entry name" value="T11908"/>
</dbReference>
<dbReference type="RefSeq" id="YP_143360.1">
    <property type="nucleotide sequence ID" value="NC_006461.1"/>
</dbReference>
<dbReference type="PDB" id="4HE8">
    <property type="method" value="X-ray"/>
    <property type="resolution" value="3.30 A"/>
    <property type="chains" value="E/K=1-95"/>
</dbReference>
<dbReference type="PDB" id="4HEA">
    <property type="method" value="X-ray"/>
    <property type="resolution" value="3.30 A"/>
    <property type="chains" value="K/S=1-95"/>
</dbReference>
<dbReference type="PDB" id="6I0D">
    <property type="method" value="X-ray"/>
    <property type="resolution" value="3.60 A"/>
    <property type="chains" value="K/S=1-95"/>
</dbReference>
<dbReference type="PDB" id="6I1P">
    <property type="method" value="X-ray"/>
    <property type="resolution" value="3.21 A"/>
    <property type="chains" value="K/S=1-95"/>
</dbReference>
<dbReference type="PDB" id="6Q8O">
    <property type="method" value="X-ray"/>
    <property type="resolution" value="3.60 A"/>
    <property type="chains" value="K/S=1-95"/>
</dbReference>
<dbReference type="PDB" id="6Q8W">
    <property type="method" value="X-ray"/>
    <property type="resolution" value="3.40 A"/>
    <property type="chains" value="K/S=1-95"/>
</dbReference>
<dbReference type="PDB" id="6Q8X">
    <property type="method" value="X-ray"/>
    <property type="resolution" value="3.51 A"/>
    <property type="chains" value="K/S=1-95"/>
</dbReference>
<dbReference type="PDB" id="6Y11">
    <property type="method" value="X-ray"/>
    <property type="resolution" value="3.11 A"/>
    <property type="chains" value="K/S=1-95"/>
</dbReference>
<dbReference type="PDB" id="6ZIY">
    <property type="method" value="EM"/>
    <property type="resolution" value="4.25 A"/>
    <property type="chains" value="K=1-95"/>
</dbReference>
<dbReference type="PDB" id="6ZJL">
    <property type="method" value="EM"/>
    <property type="resolution" value="4.30 A"/>
    <property type="chains" value="K=1-95"/>
</dbReference>
<dbReference type="PDB" id="6ZJN">
    <property type="method" value="EM"/>
    <property type="resolution" value="6.10 A"/>
    <property type="chains" value="K=1-95"/>
</dbReference>
<dbReference type="PDB" id="6ZJY">
    <property type="method" value="EM"/>
    <property type="resolution" value="5.50 A"/>
    <property type="chains" value="K=1-95"/>
</dbReference>
<dbReference type="PDBsum" id="4HE8"/>
<dbReference type="PDBsum" id="4HEA"/>
<dbReference type="PDBsum" id="6I0D"/>
<dbReference type="PDBsum" id="6I1P"/>
<dbReference type="PDBsum" id="6Q8O"/>
<dbReference type="PDBsum" id="6Q8W"/>
<dbReference type="PDBsum" id="6Q8X"/>
<dbReference type="PDBsum" id="6Y11"/>
<dbReference type="PDBsum" id="6ZIY"/>
<dbReference type="PDBsum" id="6ZJL"/>
<dbReference type="PDBsum" id="6ZJN"/>
<dbReference type="PDBsum" id="6ZJY"/>
<dbReference type="EMDB" id="EMD-11231"/>
<dbReference type="EMDB" id="EMD-11235"/>
<dbReference type="EMDB" id="EMD-11237"/>
<dbReference type="EMDB" id="EMD-11238"/>
<dbReference type="SMR" id="Q56226"/>
<dbReference type="DIP" id="DIP-59269N"/>
<dbReference type="IntAct" id="Q56226">
    <property type="interactions" value="1"/>
</dbReference>
<dbReference type="TCDB" id="3.D.1.3.1">
    <property type="family name" value="the h+ or na+-translocating nadh dehydrogenase (ndh) family"/>
</dbReference>
<dbReference type="EnsemblBacteria" id="BAD69917">
    <property type="protein sequence ID" value="BAD69917"/>
    <property type="gene ID" value="BAD69917"/>
</dbReference>
<dbReference type="GeneID" id="3169648"/>
<dbReference type="KEGG" id="ttj:TTHA0094"/>
<dbReference type="PATRIC" id="fig|300852.9.peg.92"/>
<dbReference type="eggNOG" id="COG0713">
    <property type="taxonomic scope" value="Bacteria"/>
</dbReference>
<dbReference type="HOGENOM" id="CLU_144724_0_0_0"/>
<dbReference type="PhylomeDB" id="Q56226"/>
<dbReference type="EvolutionaryTrace" id="Q56226"/>
<dbReference type="Proteomes" id="UP000000532">
    <property type="component" value="Chromosome"/>
</dbReference>
<dbReference type="GO" id="GO:0030964">
    <property type="term" value="C:NADH dehydrogenase complex"/>
    <property type="evidence" value="ECO:0007669"/>
    <property type="project" value="TreeGrafter"/>
</dbReference>
<dbReference type="GO" id="GO:0005886">
    <property type="term" value="C:plasma membrane"/>
    <property type="evidence" value="ECO:0007669"/>
    <property type="project" value="UniProtKB-SubCell"/>
</dbReference>
<dbReference type="GO" id="GO:0050136">
    <property type="term" value="F:NADH:ubiquinone reductase (non-electrogenic) activity"/>
    <property type="evidence" value="ECO:0007669"/>
    <property type="project" value="UniProtKB-UniRule"/>
</dbReference>
<dbReference type="GO" id="GO:0048038">
    <property type="term" value="F:quinone binding"/>
    <property type="evidence" value="ECO:0007669"/>
    <property type="project" value="UniProtKB-KW"/>
</dbReference>
<dbReference type="GO" id="GO:0042773">
    <property type="term" value="P:ATP synthesis coupled electron transport"/>
    <property type="evidence" value="ECO:0007669"/>
    <property type="project" value="InterPro"/>
</dbReference>
<dbReference type="FunFam" id="1.10.287.3510:FF:000001">
    <property type="entry name" value="NADH-quinone oxidoreductase subunit K"/>
    <property type="match status" value="1"/>
</dbReference>
<dbReference type="Gene3D" id="1.10.287.3510">
    <property type="match status" value="1"/>
</dbReference>
<dbReference type="HAMAP" id="MF_01456">
    <property type="entry name" value="NDH1_NuoK"/>
    <property type="match status" value="1"/>
</dbReference>
<dbReference type="InterPro" id="IPR001133">
    <property type="entry name" value="NADH_UbQ_OxRdtase_chain4L/K"/>
</dbReference>
<dbReference type="InterPro" id="IPR039428">
    <property type="entry name" value="NUOK/Mnh_C1-like"/>
</dbReference>
<dbReference type="NCBIfam" id="NF004320">
    <property type="entry name" value="PRK05715.1-2"/>
    <property type="match status" value="1"/>
</dbReference>
<dbReference type="PANTHER" id="PTHR11434:SF21">
    <property type="entry name" value="NADH DEHYDROGENASE SUBUNIT 4L-RELATED"/>
    <property type="match status" value="1"/>
</dbReference>
<dbReference type="PANTHER" id="PTHR11434">
    <property type="entry name" value="NADH-UBIQUINONE OXIDOREDUCTASE SUBUNIT ND4L"/>
    <property type="match status" value="1"/>
</dbReference>
<dbReference type="Pfam" id="PF00420">
    <property type="entry name" value="Oxidored_q2"/>
    <property type="match status" value="1"/>
</dbReference>
<sequence length="95" mass="9996">MSYLLTSALLFALGVYGVLTRRTAILVFLSIELMLNAANLSLVGFARAYGLDGQVAALMVIAVAAAEVAVGLGLIVAIFRHRESTAVDDLSELRG</sequence>
<name>NQO11_THET8</name>
<organism>
    <name type="scientific">Thermus thermophilus (strain ATCC 27634 / DSM 579 / HB8)</name>
    <dbReference type="NCBI Taxonomy" id="300852"/>
    <lineage>
        <taxon>Bacteria</taxon>
        <taxon>Thermotogati</taxon>
        <taxon>Deinococcota</taxon>
        <taxon>Deinococci</taxon>
        <taxon>Thermales</taxon>
        <taxon>Thermaceae</taxon>
        <taxon>Thermus</taxon>
    </lineage>
</organism>
<feature type="chain" id="PRO_0000118523" description="NADH-quinone oxidoreductase subunit 11">
    <location>
        <begin position="1"/>
        <end position="95"/>
    </location>
</feature>
<feature type="transmembrane region" description="Helical" evidence="1">
    <location>
        <begin position="1"/>
        <end position="21"/>
    </location>
</feature>
<feature type="transmembrane region" description="Helical" evidence="1">
    <location>
        <begin position="25"/>
        <end position="45"/>
    </location>
</feature>
<feature type="transmembrane region" description="Helical" evidence="1">
    <location>
        <begin position="59"/>
        <end position="79"/>
    </location>
</feature>
<feature type="helix" evidence="2">
    <location>
        <begin position="2"/>
        <end position="20"/>
    </location>
</feature>
<feature type="helix" evidence="2">
    <location>
        <begin position="24"/>
        <end position="49"/>
    </location>
</feature>
<feature type="helix" evidence="2">
    <location>
        <begin position="52"/>
        <end position="78"/>
    </location>
</feature>
<feature type="strand" evidence="2">
    <location>
        <begin position="80"/>
        <end position="83"/>
    </location>
</feature>
<feature type="helix" evidence="2">
    <location>
        <begin position="87"/>
        <end position="89"/>
    </location>
</feature>
<reference key="1">
    <citation type="journal article" date="1997" name="J. Biol. Chem.">
        <title>The proton-translocating NADH-quinone oxidoreductase (NDH-1) of thermophilic bacterium Thermus thermophilus HB-8. Complete DNA sequence of the gene cluster and thermostable properties of the expressed NQO2 subunit.</title>
        <authorList>
            <person name="Yano T."/>
            <person name="Chu S.S."/>
            <person name="Sled' V.D."/>
            <person name="Ohnishi T."/>
            <person name="Yagi T."/>
        </authorList>
    </citation>
    <scope>NUCLEOTIDE SEQUENCE [GENOMIC DNA]</scope>
    <source>
        <strain>ATCC 27634 / DSM 579 / HB8</strain>
    </source>
</reference>
<reference key="2">
    <citation type="submission" date="2004-11" db="EMBL/GenBank/DDBJ databases">
        <title>Complete genome sequence of Thermus thermophilus HB8.</title>
        <authorList>
            <person name="Masui R."/>
            <person name="Kurokawa K."/>
            <person name="Nakagawa N."/>
            <person name="Tokunaga F."/>
            <person name="Koyama Y."/>
            <person name="Shibata T."/>
            <person name="Oshima T."/>
            <person name="Yokoyama S."/>
            <person name="Yasunaga T."/>
            <person name="Kuramitsu S."/>
        </authorList>
    </citation>
    <scope>NUCLEOTIDE SEQUENCE [LARGE SCALE GENOMIC DNA]</scope>
    <source>
        <strain>ATCC 27634 / DSM 579 / HB8</strain>
    </source>
</reference>
<accession>Q56226</accession>
<accession>Q5SM49</accession>
<comment type="function">
    <text>NDH-1 shuttles electrons from NADH, via FMN and iron-sulfur (Fe-S) centers, to quinones in the respiratory chain. The immediate electron acceptor for the enzyme in this species is menaquinone. Couples the redox reaction to proton translocation (for every two electrons transferred, four hydrogen ions are translocated across the cytoplasmic membrane), and thus conserves the redox energy in a proton gradient required for the synthesis of ATP.</text>
</comment>
<comment type="catalytic activity">
    <reaction evidence="1">
        <text>a quinone + NADH + 5 H(+)(in) = a quinol + NAD(+) + 4 H(+)(out)</text>
        <dbReference type="Rhea" id="RHEA:57888"/>
        <dbReference type="ChEBI" id="CHEBI:15378"/>
        <dbReference type="ChEBI" id="CHEBI:24646"/>
        <dbReference type="ChEBI" id="CHEBI:57540"/>
        <dbReference type="ChEBI" id="CHEBI:57945"/>
        <dbReference type="ChEBI" id="CHEBI:132124"/>
    </reaction>
</comment>
<comment type="subunit">
    <text>NDH-1 is composed of 15 different subunits, Nqo1 to Nqo15. The complex has a L-shaped structure, with the hydrophobic arm (subunits Nqo7, Nqo8 and Nqo10 to Nqo14) embedded in the membrane and the hydrophilic peripheral arm (subunits Nqo1 to Nqo6, Nqo9 and Nqo15) protruding into the bacterial cytoplasm. The hydrophilic domain contains all the redox centers.</text>
</comment>
<comment type="subcellular location">
    <subcellularLocation>
        <location>Cell inner membrane</location>
        <topology>Multi-pass membrane protein</topology>
    </subcellularLocation>
</comment>
<comment type="similarity">
    <text evidence="1">Belongs to the complex I subunit 4L family.</text>
</comment>
<proteinExistence type="evidence at protein level"/>
<evidence type="ECO:0000255" key="1">
    <source>
        <dbReference type="HAMAP-Rule" id="MF_01456"/>
    </source>
</evidence>
<evidence type="ECO:0007829" key="2">
    <source>
        <dbReference type="PDB" id="6Y11"/>
    </source>
</evidence>
<keyword id="KW-0002">3D-structure</keyword>
<keyword id="KW-0997">Cell inner membrane</keyword>
<keyword id="KW-1003">Cell membrane</keyword>
<keyword id="KW-0472">Membrane</keyword>
<keyword id="KW-0520">NAD</keyword>
<keyword id="KW-0874">Quinone</keyword>
<keyword id="KW-1185">Reference proteome</keyword>
<keyword id="KW-1278">Translocase</keyword>
<keyword id="KW-0812">Transmembrane</keyword>
<keyword id="KW-1133">Transmembrane helix</keyword>
<keyword id="KW-0813">Transport</keyword>